<gene>
    <name evidence="1" type="primary">nuoC</name>
    <name evidence="1" type="synonym">nuoCD</name>
    <name evidence="1" type="synonym">nuoD</name>
    <name type="ordered locus">Z3545</name>
    <name type="ordered locus">ECs3170</name>
</gene>
<sequence length="600" mass="68681">MVNNMTDLTAQEPAWQTRDHLDDPVIGELRNRFGPDAFTVQATRTGVPVVWIKREQLLEVGDFLKKLPKPYVMLFDLHGMDERLRTHREGLPAADFSVFYHLISIDRNRDIMLKVALAENDLHVPTFTKLFPNANWYERETWDLFGITFDGHPNLRRIMMPQTWKGHPLRKDYPARATEFSPFELTKAKQDLEMEALTFKPEEWGMKRGTENEDFMFLNLGPNHPSAHGAFRIVLQLDGEEIVDCVPDIGYHHRGAEKMGERQSWHSYIPYTDRIEYLGGCVNEMPYVLAVEKLAGITVPARVNVIRVMLSELFRINSHLLYISTFIQDVGAMTPVFFAFTDRQKIYDLVEAITGFRMHPAWFRIGGVAHDLPRGWDRLLREFLDWMPKRLASYEKAALQNTILKGRSQGVAAYGAKEALEWGTTGAGLRATGIDFDVRKARPYSGYENFDFEIPVGGGVSDCYTRVMLKVEELRQSLRILEQCLNNMPEGPFKADHPLTTPPPKERTLQHIETLITHFLQVSWGPVMPANESFQMIEATKGINSYYLTSDGSTMSYRTRIRTPSYAHLQQIPAAIRGSLVSDLIVYLGSIDFVMSDVDR</sequence>
<feature type="chain" id="PRO_0000358637" description="NADH-quinone oxidoreductase subunit C/D">
    <location>
        <begin position="1"/>
        <end position="600"/>
    </location>
</feature>
<feature type="region of interest" description="NADH dehydrogenase I subunit C" evidence="1">
    <location>
        <begin position="1"/>
        <end position="190"/>
    </location>
</feature>
<feature type="region of interest" description="NADH dehydrogenase I subunit D" evidence="1">
    <location>
        <begin position="214"/>
        <end position="600"/>
    </location>
</feature>
<protein>
    <recommendedName>
        <fullName evidence="1">NADH-quinone oxidoreductase subunit C/D</fullName>
        <ecNumber evidence="1">7.1.1.-</ecNumber>
    </recommendedName>
    <alternativeName>
        <fullName evidence="1">NADH dehydrogenase I subunit C/D</fullName>
    </alternativeName>
    <alternativeName>
        <fullName evidence="1">NDH-1 subunit C/D</fullName>
    </alternativeName>
</protein>
<proteinExistence type="inferred from homology"/>
<organism>
    <name type="scientific">Escherichia coli O157:H7</name>
    <dbReference type="NCBI Taxonomy" id="83334"/>
    <lineage>
        <taxon>Bacteria</taxon>
        <taxon>Pseudomonadati</taxon>
        <taxon>Pseudomonadota</taxon>
        <taxon>Gammaproteobacteria</taxon>
        <taxon>Enterobacterales</taxon>
        <taxon>Enterobacteriaceae</taxon>
        <taxon>Escherichia</taxon>
    </lineage>
</organism>
<reference key="1">
    <citation type="journal article" date="2001" name="Nature">
        <title>Genome sequence of enterohaemorrhagic Escherichia coli O157:H7.</title>
        <authorList>
            <person name="Perna N.T."/>
            <person name="Plunkett G. III"/>
            <person name="Burland V."/>
            <person name="Mau B."/>
            <person name="Glasner J.D."/>
            <person name="Rose D.J."/>
            <person name="Mayhew G.F."/>
            <person name="Evans P.S."/>
            <person name="Gregor J."/>
            <person name="Kirkpatrick H.A."/>
            <person name="Posfai G."/>
            <person name="Hackett J."/>
            <person name="Klink S."/>
            <person name="Boutin A."/>
            <person name="Shao Y."/>
            <person name="Miller L."/>
            <person name="Grotbeck E.J."/>
            <person name="Davis N.W."/>
            <person name="Lim A."/>
            <person name="Dimalanta E.T."/>
            <person name="Potamousis K."/>
            <person name="Apodaca J."/>
            <person name="Anantharaman T.S."/>
            <person name="Lin J."/>
            <person name="Yen G."/>
            <person name="Schwartz D.C."/>
            <person name="Welch R.A."/>
            <person name="Blattner F.R."/>
        </authorList>
    </citation>
    <scope>NUCLEOTIDE SEQUENCE [LARGE SCALE GENOMIC DNA]</scope>
    <source>
        <strain>O157:H7 / EDL933 / ATCC 700927 / EHEC</strain>
    </source>
</reference>
<reference key="2">
    <citation type="journal article" date="2001" name="DNA Res.">
        <title>Complete genome sequence of enterohemorrhagic Escherichia coli O157:H7 and genomic comparison with a laboratory strain K-12.</title>
        <authorList>
            <person name="Hayashi T."/>
            <person name="Makino K."/>
            <person name="Ohnishi M."/>
            <person name="Kurokawa K."/>
            <person name="Ishii K."/>
            <person name="Yokoyama K."/>
            <person name="Han C.-G."/>
            <person name="Ohtsubo E."/>
            <person name="Nakayama K."/>
            <person name="Murata T."/>
            <person name="Tanaka M."/>
            <person name="Tobe T."/>
            <person name="Iida T."/>
            <person name="Takami H."/>
            <person name="Honda T."/>
            <person name="Sasakawa C."/>
            <person name="Ogasawara N."/>
            <person name="Yasunaga T."/>
            <person name="Kuhara S."/>
            <person name="Shiba T."/>
            <person name="Hattori M."/>
            <person name="Shinagawa H."/>
        </authorList>
    </citation>
    <scope>NUCLEOTIDE SEQUENCE [LARGE SCALE GENOMIC DNA]</scope>
    <source>
        <strain>O157:H7 / Sakai / RIMD 0509952 / EHEC</strain>
    </source>
</reference>
<dbReference type="EC" id="7.1.1.-" evidence="1"/>
<dbReference type="EMBL" id="AE005174">
    <property type="protein sequence ID" value="AAG57415.1"/>
    <property type="molecule type" value="Genomic_DNA"/>
</dbReference>
<dbReference type="EMBL" id="BA000007">
    <property type="protein sequence ID" value="BAB36593.1"/>
    <property type="molecule type" value="Genomic_DNA"/>
</dbReference>
<dbReference type="PIR" id="B91025">
    <property type="entry name" value="B91025"/>
</dbReference>
<dbReference type="PIR" id="C85869">
    <property type="entry name" value="C85869"/>
</dbReference>
<dbReference type="RefSeq" id="NP_311197.2">
    <property type="nucleotide sequence ID" value="NC_002695.1"/>
</dbReference>
<dbReference type="SMR" id="Q8XCW9"/>
<dbReference type="STRING" id="155864.Z3545"/>
<dbReference type="GeneID" id="916878"/>
<dbReference type="KEGG" id="ece:Z3545"/>
<dbReference type="KEGG" id="ecs:ECs_3170"/>
<dbReference type="PATRIC" id="fig|386585.9.peg.3308"/>
<dbReference type="eggNOG" id="COG0649">
    <property type="taxonomic scope" value="Bacteria"/>
</dbReference>
<dbReference type="eggNOG" id="COG0852">
    <property type="taxonomic scope" value="Bacteria"/>
</dbReference>
<dbReference type="HOGENOM" id="CLU_015134_3_2_6"/>
<dbReference type="OMA" id="TRMDYLT"/>
<dbReference type="Proteomes" id="UP000000558">
    <property type="component" value="Chromosome"/>
</dbReference>
<dbReference type="Proteomes" id="UP000002519">
    <property type="component" value="Chromosome"/>
</dbReference>
<dbReference type="GO" id="GO:0030964">
    <property type="term" value="C:NADH dehydrogenase complex"/>
    <property type="evidence" value="ECO:0007669"/>
    <property type="project" value="InterPro"/>
</dbReference>
<dbReference type="GO" id="GO:0005886">
    <property type="term" value="C:plasma membrane"/>
    <property type="evidence" value="ECO:0007669"/>
    <property type="project" value="UniProtKB-SubCell"/>
</dbReference>
<dbReference type="GO" id="GO:0051287">
    <property type="term" value="F:NAD binding"/>
    <property type="evidence" value="ECO:0007669"/>
    <property type="project" value="InterPro"/>
</dbReference>
<dbReference type="GO" id="GO:0008137">
    <property type="term" value="F:NADH dehydrogenase (ubiquinone) activity"/>
    <property type="evidence" value="ECO:0007669"/>
    <property type="project" value="InterPro"/>
</dbReference>
<dbReference type="GO" id="GO:0050136">
    <property type="term" value="F:NADH:ubiquinone reductase (non-electrogenic) activity"/>
    <property type="evidence" value="ECO:0007669"/>
    <property type="project" value="UniProtKB-UniRule"/>
</dbReference>
<dbReference type="GO" id="GO:0048038">
    <property type="term" value="F:quinone binding"/>
    <property type="evidence" value="ECO:0007669"/>
    <property type="project" value="UniProtKB-KW"/>
</dbReference>
<dbReference type="FunFam" id="1.10.645.10:FF:000001">
    <property type="entry name" value="NADH-quinone oxidoreductase subunit C/D"/>
    <property type="match status" value="1"/>
</dbReference>
<dbReference type="FunFam" id="3.30.460.80:FF:000001">
    <property type="entry name" value="NADH-quinone oxidoreductase subunit C/D"/>
    <property type="match status" value="1"/>
</dbReference>
<dbReference type="Gene3D" id="1.10.645.10">
    <property type="entry name" value="Cytochrome-c3 Hydrogenase, chain B"/>
    <property type="match status" value="1"/>
</dbReference>
<dbReference type="Gene3D" id="3.30.460.80">
    <property type="entry name" value="NADH:ubiquinone oxidoreductase, 30kDa subunit"/>
    <property type="match status" value="1"/>
</dbReference>
<dbReference type="HAMAP" id="MF_01357">
    <property type="entry name" value="NDH1_NuoC"/>
    <property type="match status" value="1"/>
</dbReference>
<dbReference type="HAMAP" id="MF_01359">
    <property type="entry name" value="NDH1_NuoCD_1"/>
    <property type="match status" value="1"/>
</dbReference>
<dbReference type="HAMAP" id="MF_01358">
    <property type="entry name" value="NDH1_NuoD"/>
    <property type="match status" value="1"/>
</dbReference>
<dbReference type="InterPro" id="IPR010218">
    <property type="entry name" value="NADH_DH_suC"/>
</dbReference>
<dbReference type="InterPro" id="IPR023062">
    <property type="entry name" value="NADH_DH_suCD"/>
</dbReference>
<dbReference type="InterPro" id="IPR001135">
    <property type="entry name" value="NADH_Q_OxRdtase_suD"/>
</dbReference>
<dbReference type="InterPro" id="IPR037232">
    <property type="entry name" value="NADH_quin_OxRdtase_su_C/D-like"/>
</dbReference>
<dbReference type="InterPro" id="IPR001268">
    <property type="entry name" value="NADH_UbQ_OxRdtase_30kDa_su"/>
</dbReference>
<dbReference type="InterPro" id="IPR014029">
    <property type="entry name" value="NADH_UbQ_OxRdtase_49kDa_CS"/>
</dbReference>
<dbReference type="InterPro" id="IPR020396">
    <property type="entry name" value="NADH_UbQ_OxRdtase_CS"/>
</dbReference>
<dbReference type="InterPro" id="IPR022885">
    <property type="entry name" value="NDH1_su_D/H"/>
</dbReference>
<dbReference type="InterPro" id="IPR029014">
    <property type="entry name" value="NiFe-Hase_large"/>
</dbReference>
<dbReference type="NCBIfam" id="TIGR01961">
    <property type="entry name" value="NuoC_fam"/>
    <property type="match status" value="1"/>
</dbReference>
<dbReference type="NCBIfam" id="TIGR01962">
    <property type="entry name" value="NuoD"/>
    <property type="match status" value="1"/>
</dbReference>
<dbReference type="NCBIfam" id="NF004739">
    <property type="entry name" value="PRK06075.1"/>
    <property type="match status" value="1"/>
</dbReference>
<dbReference type="NCBIfam" id="NF008728">
    <property type="entry name" value="PRK11742.1"/>
    <property type="match status" value="1"/>
</dbReference>
<dbReference type="PANTHER" id="PTHR11993:SF45">
    <property type="entry name" value="NADH-QUINONE OXIDOREDUCTASE SUBUNIT C_D"/>
    <property type="match status" value="1"/>
</dbReference>
<dbReference type="PANTHER" id="PTHR11993">
    <property type="entry name" value="NADH-UBIQUINONE OXIDOREDUCTASE 49 KDA SUBUNIT"/>
    <property type="match status" value="1"/>
</dbReference>
<dbReference type="Pfam" id="PF00329">
    <property type="entry name" value="Complex1_30kDa"/>
    <property type="match status" value="1"/>
</dbReference>
<dbReference type="Pfam" id="PF00346">
    <property type="entry name" value="Complex1_49kDa"/>
    <property type="match status" value="1"/>
</dbReference>
<dbReference type="SUPFAM" id="SSF56762">
    <property type="entry name" value="HydB/Nqo4-like"/>
    <property type="match status" value="1"/>
</dbReference>
<dbReference type="SUPFAM" id="SSF143243">
    <property type="entry name" value="Nqo5-like"/>
    <property type="match status" value="1"/>
</dbReference>
<dbReference type="PROSITE" id="PS00542">
    <property type="entry name" value="COMPLEX1_30K"/>
    <property type="match status" value="1"/>
</dbReference>
<dbReference type="PROSITE" id="PS00535">
    <property type="entry name" value="COMPLEX1_49K"/>
    <property type="match status" value="1"/>
</dbReference>
<accession>Q8XCW9</accession>
<accession>Q7AC07</accession>
<name>NUOCD_ECO57</name>
<comment type="function">
    <text evidence="1">NDH-1 shuttles electrons from NADH, via FMN and iron-sulfur (Fe-S) centers, to quinones in the respiratory chain. The immediate electron acceptor for the enzyme in this species is believed to be ubiquinone. Couples the redox reaction to proton translocation (for every two electrons transferred, four hydrogen ions are translocated across the cytoplasmic membrane), and thus conserves the redox energy in a proton gradient.</text>
</comment>
<comment type="catalytic activity">
    <reaction evidence="1">
        <text>a quinone + NADH + 5 H(+)(in) = a quinol + NAD(+) + 4 H(+)(out)</text>
        <dbReference type="Rhea" id="RHEA:57888"/>
        <dbReference type="ChEBI" id="CHEBI:15378"/>
        <dbReference type="ChEBI" id="CHEBI:24646"/>
        <dbReference type="ChEBI" id="CHEBI:57540"/>
        <dbReference type="ChEBI" id="CHEBI:57945"/>
        <dbReference type="ChEBI" id="CHEBI:132124"/>
    </reaction>
</comment>
<comment type="subunit">
    <text evidence="1">NDH-1 is composed of 13 different subunits. Subunits NuoB, CD, E, F, and G constitute the peripheral sector of the complex.</text>
</comment>
<comment type="subcellular location">
    <subcellularLocation>
        <location evidence="1">Cell inner membrane</location>
        <topology evidence="1">Peripheral membrane protein</topology>
        <orientation evidence="1">Cytoplasmic side</orientation>
    </subcellularLocation>
</comment>
<comment type="similarity">
    <text evidence="1">In the N-terminal section; belongs to the complex I 30 kDa subunit family.</text>
</comment>
<comment type="similarity">
    <text evidence="1">In the C-terminal section; belongs to the complex I 49 kDa subunit family.</text>
</comment>
<evidence type="ECO:0000255" key="1">
    <source>
        <dbReference type="HAMAP-Rule" id="MF_01359"/>
    </source>
</evidence>
<keyword id="KW-0997">Cell inner membrane</keyword>
<keyword id="KW-1003">Cell membrane</keyword>
<keyword id="KW-0472">Membrane</keyword>
<keyword id="KW-0511">Multifunctional enzyme</keyword>
<keyword id="KW-0520">NAD</keyword>
<keyword id="KW-0874">Quinone</keyword>
<keyword id="KW-1185">Reference proteome</keyword>
<keyword id="KW-1278">Translocase</keyword>
<keyword id="KW-0813">Transport</keyword>
<keyword id="KW-0830">Ubiquinone</keyword>